<keyword id="KW-0687">Ribonucleoprotein</keyword>
<keyword id="KW-0689">Ribosomal protein</keyword>
<evidence type="ECO:0000255" key="1">
    <source>
        <dbReference type="HAMAP-Rule" id="MF_00539"/>
    </source>
</evidence>
<evidence type="ECO:0000305" key="2"/>
<dbReference type="EMBL" id="CP000058">
    <property type="protein sequence ID" value="AAZ37409.1"/>
    <property type="molecule type" value="Genomic_DNA"/>
</dbReference>
<dbReference type="RefSeq" id="WP_002551972.1">
    <property type="nucleotide sequence ID" value="NC_005773.3"/>
</dbReference>
<dbReference type="SMR" id="Q48NL3"/>
<dbReference type="GeneID" id="96217044"/>
<dbReference type="KEGG" id="psp:PSPPH_0714"/>
<dbReference type="eggNOG" id="COG0211">
    <property type="taxonomic scope" value="Bacteria"/>
</dbReference>
<dbReference type="HOGENOM" id="CLU_095424_4_1_6"/>
<dbReference type="Proteomes" id="UP000000551">
    <property type="component" value="Chromosome"/>
</dbReference>
<dbReference type="GO" id="GO:0022625">
    <property type="term" value="C:cytosolic large ribosomal subunit"/>
    <property type="evidence" value="ECO:0007669"/>
    <property type="project" value="TreeGrafter"/>
</dbReference>
<dbReference type="GO" id="GO:0003735">
    <property type="term" value="F:structural constituent of ribosome"/>
    <property type="evidence" value="ECO:0007669"/>
    <property type="project" value="InterPro"/>
</dbReference>
<dbReference type="GO" id="GO:0006412">
    <property type="term" value="P:translation"/>
    <property type="evidence" value="ECO:0007669"/>
    <property type="project" value="UniProtKB-UniRule"/>
</dbReference>
<dbReference type="FunFam" id="2.40.50.100:FF:000001">
    <property type="entry name" value="50S ribosomal protein L27"/>
    <property type="match status" value="1"/>
</dbReference>
<dbReference type="Gene3D" id="2.40.50.100">
    <property type="match status" value="1"/>
</dbReference>
<dbReference type="HAMAP" id="MF_00539">
    <property type="entry name" value="Ribosomal_bL27"/>
    <property type="match status" value="1"/>
</dbReference>
<dbReference type="InterPro" id="IPR001684">
    <property type="entry name" value="Ribosomal_bL27"/>
</dbReference>
<dbReference type="InterPro" id="IPR018261">
    <property type="entry name" value="Ribosomal_bL27_CS"/>
</dbReference>
<dbReference type="NCBIfam" id="TIGR00062">
    <property type="entry name" value="L27"/>
    <property type="match status" value="1"/>
</dbReference>
<dbReference type="PANTHER" id="PTHR15893:SF0">
    <property type="entry name" value="LARGE RIBOSOMAL SUBUNIT PROTEIN BL27M"/>
    <property type="match status" value="1"/>
</dbReference>
<dbReference type="PANTHER" id="PTHR15893">
    <property type="entry name" value="RIBOSOMAL PROTEIN L27"/>
    <property type="match status" value="1"/>
</dbReference>
<dbReference type="Pfam" id="PF01016">
    <property type="entry name" value="Ribosomal_L27"/>
    <property type="match status" value="1"/>
</dbReference>
<dbReference type="PRINTS" id="PR00063">
    <property type="entry name" value="RIBOSOMALL27"/>
</dbReference>
<dbReference type="SUPFAM" id="SSF110324">
    <property type="entry name" value="Ribosomal L27 protein-like"/>
    <property type="match status" value="1"/>
</dbReference>
<dbReference type="PROSITE" id="PS00831">
    <property type="entry name" value="RIBOSOMAL_L27"/>
    <property type="match status" value="1"/>
</dbReference>
<feature type="chain" id="PRO_1000017555" description="Large ribosomal subunit protein bL27">
    <location>
        <begin position="1"/>
        <end position="91"/>
    </location>
</feature>
<sequence>MAHKKAGGSTRNGRDSEAKRLGVKMYGGQAIIPGNIIVRQRGTQFHAGYGVGMGKDHTLFAKVEGVIKFQVKGAFGRRYVSIVPKTEVSAA</sequence>
<organism>
    <name type="scientific">Pseudomonas savastanoi pv. phaseolicola (strain 1448A / Race 6)</name>
    <name type="common">Pseudomonas syringae pv. phaseolicola (strain 1448A / Race 6)</name>
    <dbReference type="NCBI Taxonomy" id="264730"/>
    <lineage>
        <taxon>Bacteria</taxon>
        <taxon>Pseudomonadati</taxon>
        <taxon>Pseudomonadota</taxon>
        <taxon>Gammaproteobacteria</taxon>
        <taxon>Pseudomonadales</taxon>
        <taxon>Pseudomonadaceae</taxon>
        <taxon>Pseudomonas</taxon>
    </lineage>
</organism>
<name>RL27_PSE14</name>
<gene>
    <name evidence="1" type="primary">rpmA</name>
    <name type="ordered locus">PSPPH_0714</name>
</gene>
<reference key="1">
    <citation type="journal article" date="2005" name="J. Bacteriol.">
        <title>Whole-genome sequence analysis of Pseudomonas syringae pv. phaseolicola 1448A reveals divergence among pathovars in genes involved in virulence and transposition.</title>
        <authorList>
            <person name="Joardar V."/>
            <person name="Lindeberg M."/>
            <person name="Jackson R.W."/>
            <person name="Selengut J."/>
            <person name="Dodson R."/>
            <person name="Brinkac L.M."/>
            <person name="Daugherty S.C."/>
            <person name="DeBoy R.T."/>
            <person name="Durkin A.S."/>
            <person name="Gwinn Giglio M."/>
            <person name="Madupu R."/>
            <person name="Nelson W.C."/>
            <person name="Rosovitz M.J."/>
            <person name="Sullivan S.A."/>
            <person name="Crabtree J."/>
            <person name="Creasy T."/>
            <person name="Davidsen T.M."/>
            <person name="Haft D.H."/>
            <person name="Zafar N."/>
            <person name="Zhou L."/>
            <person name="Halpin R."/>
            <person name="Holley T."/>
            <person name="Khouri H.M."/>
            <person name="Feldblyum T.V."/>
            <person name="White O."/>
            <person name="Fraser C.M."/>
            <person name="Chatterjee A.K."/>
            <person name="Cartinhour S."/>
            <person name="Schneider D."/>
            <person name="Mansfield J.W."/>
            <person name="Collmer A."/>
            <person name="Buell R."/>
        </authorList>
    </citation>
    <scope>NUCLEOTIDE SEQUENCE [LARGE SCALE GENOMIC DNA]</scope>
    <source>
        <strain>1448A / Race 6</strain>
    </source>
</reference>
<accession>Q48NL3</accession>
<comment type="similarity">
    <text evidence="1">Belongs to the bacterial ribosomal protein bL27 family.</text>
</comment>
<protein>
    <recommendedName>
        <fullName evidence="1">Large ribosomal subunit protein bL27</fullName>
    </recommendedName>
    <alternativeName>
        <fullName evidence="2">50S ribosomal protein L27</fullName>
    </alternativeName>
</protein>
<proteinExistence type="inferred from homology"/>